<feature type="chain" id="PRO_0000054131" description="Calcium-activated potassium channel subunit alpha-1">
    <location>
        <begin position="1" status="less than"/>
        <end position="1159"/>
    </location>
</feature>
<feature type="topological domain" description="Extracellular" evidence="6">
    <location>
        <begin position="1" status="less than"/>
        <end position="24"/>
    </location>
</feature>
<feature type="transmembrane region" description="Helical; Name=Segment S0" evidence="6">
    <location>
        <begin position="25"/>
        <end position="45"/>
    </location>
</feature>
<feature type="topological domain" description="Cytoplasmic" evidence="6">
    <location>
        <begin position="46"/>
        <end position="116"/>
    </location>
</feature>
<feature type="transmembrane region" description="Helical; Name=Segment S1" evidence="6">
    <location>
        <begin position="117"/>
        <end position="137"/>
    </location>
</feature>
<feature type="topological domain" description="Extracellular" evidence="6">
    <location>
        <begin position="138"/>
        <end position="152"/>
    </location>
</feature>
<feature type="transmembrane region" description="Helical; Name=Segment S2" evidence="6">
    <location>
        <begin position="153"/>
        <end position="173"/>
    </location>
</feature>
<feature type="topological domain" description="Cytoplasmic" evidence="6">
    <location>
        <begin position="174"/>
        <end position="177"/>
    </location>
</feature>
<feature type="transmembrane region" description="Helical; Name=Segment S3" evidence="6">
    <location>
        <begin position="178"/>
        <end position="198"/>
    </location>
</feature>
<feature type="topological domain" description="Extracellular" evidence="6">
    <location>
        <begin position="199"/>
        <end position="202"/>
    </location>
</feature>
<feature type="transmembrane region" description="Helical; Voltage-sensor; Name=Segment S4" evidence="6">
    <location>
        <begin position="203"/>
        <end position="223"/>
    </location>
</feature>
<feature type="topological domain" description="Cytoplasmic" evidence="6">
    <location>
        <begin position="224"/>
        <end position="238"/>
    </location>
</feature>
<feature type="transmembrane region" description="Helical; Name=Segment S5" evidence="6">
    <location>
        <begin position="239"/>
        <end position="259"/>
    </location>
</feature>
<feature type="topological domain" description="Extracellular" evidence="6">
    <location>
        <begin position="260"/>
        <end position="273"/>
    </location>
</feature>
<feature type="intramembrane region" description="Pore-forming; Name=P region" evidence="6">
    <location>
        <begin position="274"/>
        <end position="296"/>
    </location>
</feature>
<feature type="topological domain" description="Extracellular" evidence="6">
    <location>
        <begin position="297"/>
        <end position="305"/>
    </location>
</feature>
<feature type="transmembrane region" description="Helical; Name=Segment S6" evidence="6">
    <location>
        <begin position="306"/>
        <end position="326"/>
    </location>
</feature>
<feature type="topological domain" description="Cytoplasmic" evidence="6">
    <location>
        <begin position="327"/>
        <end position="1159"/>
    </location>
</feature>
<feature type="domain" description="RCK N-terminal 1" evidence="7">
    <location>
        <begin position="345"/>
        <end position="487"/>
    </location>
</feature>
<feature type="domain" description="RCK N-terminal 2" evidence="7">
    <location>
        <begin position="719"/>
        <end position="863"/>
    </location>
</feature>
<feature type="region of interest" description="Segment S7">
    <location>
        <begin position="494"/>
        <end position="514"/>
    </location>
</feature>
<feature type="region of interest" description="Segment S8">
    <location>
        <begin position="551"/>
        <end position="571"/>
    </location>
</feature>
<feature type="region of interest" description="Heme-binding motif" evidence="4">
    <location>
        <begin position="615"/>
        <end position="619"/>
    </location>
</feature>
<feature type="region of interest" description="Disordered" evidence="8">
    <location>
        <begin position="639"/>
        <end position="668"/>
    </location>
</feature>
<feature type="region of interest" description="Segment S9">
    <location>
        <begin position="717"/>
        <end position="737"/>
    </location>
</feature>
<feature type="region of interest" description="Segment S10">
    <location>
        <begin position="912"/>
        <end position="932"/>
    </location>
</feature>
<feature type="region of interest" description="Disordered" evidence="8">
    <location>
        <begin position="1066"/>
        <end position="1124"/>
    </location>
</feature>
<feature type="short sequence motif" description="Selectivity for potassium">
    <location>
        <begin position="290"/>
        <end position="293"/>
    </location>
</feature>
<feature type="short sequence motif" description="Calcium bowl" evidence="2">
    <location>
        <begin position="883"/>
        <end position="905"/>
    </location>
</feature>
<feature type="compositionally biased region" description="Low complexity" evidence="8">
    <location>
        <begin position="1066"/>
        <end position="1091"/>
    </location>
</feature>
<feature type="compositionally biased region" description="Basic and acidic residues" evidence="8">
    <location>
        <begin position="1100"/>
        <end position="1115"/>
    </location>
</feature>
<feature type="binding site" evidence="10">
    <location>
        <position position="377"/>
    </location>
    <ligand>
        <name>Mg(2+)</name>
        <dbReference type="ChEBI" id="CHEBI:18420"/>
    </ligand>
</feature>
<feature type="binding site" evidence="10">
    <location>
        <position position="400"/>
    </location>
    <ligand>
        <name>Mg(2+)</name>
        <dbReference type="ChEBI" id="CHEBI:18420"/>
    </ligand>
</feature>
<feature type="binding site" evidence="10">
    <location>
        <position position="402"/>
    </location>
    <ligand>
        <name>Mg(2+)</name>
        <dbReference type="ChEBI" id="CHEBI:18420"/>
    </ligand>
</feature>
<feature type="binding site" evidence="2">
    <location>
        <position position="892"/>
    </location>
    <ligand>
        <name>Ca(2+)</name>
        <dbReference type="ChEBI" id="CHEBI:29108"/>
    </ligand>
</feature>
<feature type="binding site" evidence="2">
    <location>
        <position position="895"/>
    </location>
    <ligand>
        <name>Ca(2+)</name>
        <dbReference type="ChEBI" id="CHEBI:29108"/>
    </ligand>
</feature>
<feature type="binding site" evidence="2">
    <location>
        <position position="898"/>
    </location>
    <ligand>
        <name>Ca(2+)</name>
        <dbReference type="ChEBI" id="CHEBI:29108"/>
    </ligand>
</feature>
<feature type="binding site" evidence="2">
    <location>
        <position position="900"/>
    </location>
    <ligand>
        <name>Ca(2+)</name>
        <dbReference type="ChEBI" id="CHEBI:29108"/>
    </ligand>
</feature>
<feature type="modified residue" description="Phosphothreonine" evidence="3">
    <location>
        <position position="643"/>
    </location>
</feature>
<feature type="modified residue" description="Phosphoserine" evidence="3">
    <location>
        <position position="645"/>
    </location>
</feature>
<feature type="modified residue" description="Phosphoserine" evidence="3">
    <location>
        <position position="658"/>
    </location>
</feature>
<feature type="modified residue" description="Phosphoserine" evidence="3">
    <location>
        <position position="662"/>
    </location>
</feature>
<feature type="modified residue" description="Phosphothreonine" evidence="3">
    <location>
        <position position="850"/>
    </location>
</feature>
<feature type="modified residue" description="Phosphoserine" evidence="3">
    <location>
        <position position="858"/>
    </location>
</feature>
<feature type="modified residue" description="Phosphoserine" evidence="3">
    <location>
        <position position="862"/>
    </location>
</feature>
<feature type="modified residue" description="Phosphoserine" evidence="5">
    <location>
        <position position="1101"/>
    </location>
</feature>
<feature type="modified residue" description="Phosphoserine" evidence="5">
    <location>
        <position position="1104"/>
    </location>
</feature>
<feature type="lipid moiety-binding region" description="S-palmitoyl cysteine" evidence="4">
    <location>
        <position position="56"/>
    </location>
</feature>
<feature type="lipid moiety-binding region" description="S-palmitoyl cysteine" evidence="4">
    <location>
        <position position="57"/>
    </location>
</feature>
<feature type="lipid moiety-binding region" description="S-palmitoyl cysteine" evidence="4">
    <location>
        <position position="59"/>
    </location>
</feature>
<feature type="non-terminal residue">
    <location>
        <position position="1"/>
    </location>
</feature>
<evidence type="ECO:0000250" key="1"/>
<evidence type="ECO:0000250" key="2">
    <source>
        <dbReference type="UniProtKB" id="B7ZC96"/>
    </source>
</evidence>
<evidence type="ECO:0000250" key="3">
    <source>
        <dbReference type="UniProtKB" id="Q08460"/>
    </source>
</evidence>
<evidence type="ECO:0000250" key="4">
    <source>
        <dbReference type="UniProtKB" id="Q12791"/>
    </source>
</evidence>
<evidence type="ECO:0000250" key="5">
    <source>
        <dbReference type="UniProtKB" id="Q28204"/>
    </source>
</evidence>
<evidence type="ECO:0000255" key="6"/>
<evidence type="ECO:0000255" key="7">
    <source>
        <dbReference type="PROSITE-ProRule" id="PRU00543"/>
    </source>
</evidence>
<evidence type="ECO:0000256" key="8">
    <source>
        <dbReference type="SAM" id="MobiDB-lite"/>
    </source>
</evidence>
<evidence type="ECO:0000269" key="9">
    <source>
    </source>
</evidence>
<evidence type="ECO:0000305" key="10"/>
<keyword id="KW-0025">Alternative splicing</keyword>
<keyword id="KW-0106">Calcium</keyword>
<keyword id="KW-1003">Cell membrane</keyword>
<keyword id="KW-0407">Ion channel</keyword>
<keyword id="KW-0406">Ion transport</keyword>
<keyword id="KW-0449">Lipoprotein</keyword>
<keyword id="KW-0460">Magnesium</keyword>
<keyword id="KW-0472">Membrane</keyword>
<keyword id="KW-0479">Metal-binding</keyword>
<keyword id="KW-0564">Palmitate</keyword>
<keyword id="KW-0597">Phosphoprotein</keyword>
<keyword id="KW-0630">Potassium</keyword>
<keyword id="KW-0631">Potassium channel</keyword>
<keyword id="KW-0633">Potassium transport</keyword>
<keyword id="KW-1185">Reference proteome</keyword>
<keyword id="KW-0812">Transmembrane</keyword>
<keyword id="KW-1133">Transmembrane helix</keyword>
<keyword id="KW-0813">Transport</keyword>
<keyword id="KW-0851">Voltage-gated channel</keyword>
<gene>
    <name type="primary">KCNMA1</name>
    <name type="synonym">KCNMA</name>
</gene>
<accession>Q28265</accession>
<sequence>EPNMDALIIPVTMEVPCDSRGQRMWWAFLASSMVTFFGGLFIILLWRTLKYLWTVCCHCGDKTKEAQKINNGSSQADGTLKPVDEKEEAVAAEVGWMTSVKDWAGVMISAQTLTGRVLVVLVFALSIGALVIYFIDSSNPIESCQNFYKDFTLQIDMAFNVFFLLYFGLRFIAANDNLWFWLEVNSVVDFFTVPPVFVSVYLNRSWLGLRFLRALRLIQFSEILQFLNILKTSNSIKLVNLLSIFISTWLTAAGFIHLVENSGDPWENFQNSQALTYWECVYLLMVTMSTVGYGDVYAKTTPGGLFIVFFILGGLAMFASYVPEIIEIIGNRKKYGGSYSAVSGRKHIVVCGHITLESVSHFLKDFLHKDRDDVNVEIVFLHNISPNLELEALFKRHFTQVEFYQGSVLNPHDLARVKIESADACLILANKYCDDPDAEDASNIMRVISIKNYHPKIRIITQMLQYHNKAHLLNIPSWNWKEGDDAICLAELRLGFIAQSCLAQGLSTMLANLFSIGSFIKIEEDTWHKYYLEGVSNEMYTEYLSSAFVGLSFPTVCELCFVKLKLLMIAIEYKSANRESRILINPGNHLKIQEGTSGFFIASDAKEVKRAFFYCKACHNDITDPKRIKKCGCKRLEDEQPSTLSPKKKQRNGGMRNSPSSSPKLMRHDPLLIPGNDQIDNMDSNVKKYDSTGMFHWCAPKEIEKVISTRSEAAMTVLSGHVVVCIFGHVSSALIGLRNLVMPLRASNFHYHELKHIVFVGSIEYLKREWETLHNFPKVSILPGTPLTRADLRAVNINLCDMCVILSANQNNIDDTSLQDKECILASLNIKSMQFDDSIGVLQANSQGFTPPGMDKSSPDNSPVHGMLRQPSITTGVNIPIITELVNDTNVQFLDQDDDDDPDTELYLTQPFACGTAFAVSVLDSLMSATYFNDNILTLIRTLVTGGATPELEALIAEENALRGGYSTPQTLANRDRCRVAQLALLDGPFADLGDGGCYGDLFCKALKTYNMLCFGIYRLRDAHLSTPSQCTKRYVITNPPYRFELVPTDLIFCLMQFDHNAGQSRASLSHSSHSSQSSSKKSSSVHSIPSTANRQNRPKSRESRDKQTEKKWFTDEPDNAYPRNIQIEPMSTHMANQINQYKSTSSLIPPIREVEDEC</sequence>
<proteinExistence type="evidence at transcript level"/>
<reference key="1">
    <citation type="journal article" date="1996" name="Am. J. Physiol.">
        <title>Cloning and expression of the large-conductance Ca(2+)-activated K+ channel from colonic smooth muscle.</title>
        <authorList>
            <person name="Vogalis F."/>
            <person name="Vincent T."/>
            <person name="Qureshi I."/>
            <person name="Schmalz F.M."/>
            <person name="Ward M.W."/>
            <person name="Sanders K.M."/>
            <person name="Horowitz B."/>
        </authorList>
    </citation>
    <scope>NUCLEOTIDE SEQUENCE [MRNA]</scope>
    <scope>FUNCTION</scope>
    <scope>TISSUE SPECIFICITY</scope>
    <scope>TRANSPORTER ACTIVITY</scope>
    <source>
        <tissue>Colon smooth muscle</tissue>
    </source>
</reference>
<dbReference type="EMBL" id="U41001">
    <property type="protein sequence ID" value="AAA84000.1"/>
    <property type="molecule type" value="mRNA"/>
</dbReference>
<dbReference type="RefSeq" id="NP_001003300.2">
    <property type="nucleotide sequence ID" value="NM_001003300.2"/>
</dbReference>
<dbReference type="SMR" id="Q28265"/>
<dbReference type="FunCoup" id="Q28265">
    <property type="interactions" value="684"/>
</dbReference>
<dbReference type="STRING" id="9615.ENSCAFP00000022780"/>
<dbReference type="iPTMnet" id="Q28265"/>
<dbReference type="PaxDb" id="9612-ENSCAFP00000022784"/>
<dbReference type="GeneID" id="403984"/>
<dbReference type="KEGG" id="cfa:403984"/>
<dbReference type="CTD" id="3778"/>
<dbReference type="eggNOG" id="KOG1420">
    <property type="taxonomic scope" value="Eukaryota"/>
</dbReference>
<dbReference type="InParanoid" id="Q28265"/>
<dbReference type="OrthoDB" id="10035564at2759"/>
<dbReference type="Proteomes" id="UP000002254">
    <property type="component" value="Unplaced"/>
</dbReference>
<dbReference type="Proteomes" id="UP000694429">
    <property type="component" value="Unplaced"/>
</dbReference>
<dbReference type="Proteomes" id="UP000694542">
    <property type="component" value="Unplaced"/>
</dbReference>
<dbReference type="Proteomes" id="UP000805418">
    <property type="component" value="Unplaced"/>
</dbReference>
<dbReference type="GO" id="GO:0016324">
    <property type="term" value="C:apical plasma membrane"/>
    <property type="evidence" value="ECO:0000247"/>
    <property type="project" value="AgBase"/>
</dbReference>
<dbReference type="GO" id="GO:0005901">
    <property type="term" value="C:caveola"/>
    <property type="evidence" value="ECO:0000247"/>
    <property type="project" value="AgBase"/>
</dbReference>
<dbReference type="GO" id="GO:0005737">
    <property type="term" value="C:cytoplasm"/>
    <property type="evidence" value="ECO:0000247"/>
    <property type="project" value="AgBase"/>
</dbReference>
<dbReference type="GO" id="GO:0005783">
    <property type="term" value="C:endoplasmic reticulum"/>
    <property type="evidence" value="ECO:0000247"/>
    <property type="project" value="AgBase"/>
</dbReference>
<dbReference type="GO" id="GO:0009897">
    <property type="term" value="C:external side of plasma membrane"/>
    <property type="evidence" value="ECO:0000247"/>
    <property type="project" value="AgBase"/>
</dbReference>
<dbReference type="GO" id="GO:0070062">
    <property type="term" value="C:extracellular exosome"/>
    <property type="evidence" value="ECO:0000247"/>
    <property type="project" value="AgBase"/>
</dbReference>
<dbReference type="GO" id="GO:0016020">
    <property type="term" value="C:membrane"/>
    <property type="evidence" value="ECO:0000247"/>
    <property type="project" value="AgBase"/>
</dbReference>
<dbReference type="GO" id="GO:0005886">
    <property type="term" value="C:plasma membrane"/>
    <property type="evidence" value="ECO:0000247"/>
    <property type="project" value="AgBase"/>
</dbReference>
<dbReference type="GO" id="GO:0045211">
    <property type="term" value="C:postsynaptic membrane"/>
    <property type="evidence" value="ECO:0000247"/>
    <property type="project" value="AgBase"/>
</dbReference>
<dbReference type="GO" id="GO:0043195">
    <property type="term" value="C:terminal bouton"/>
    <property type="evidence" value="ECO:0000247"/>
    <property type="project" value="AgBase"/>
</dbReference>
<dbReference type="GO" id="GO:0008076">
    <property type="term" value="C:voltage-gated potassium channel complex"/>
    <property type="evidence" value="ECO:0000247"/>
    <property type="project" value="AgBase"/>
</dbReference>
<dbReference type="GO" id="GO:0003779">
    <property type="term" value="F:actin binding"/>
    <property type="evidence" value="ECO:0000247"/>
    <property type="project" value="AgBase"/>
</dbReference>
<dbReference type="GO" id="GO:0015269">
    <property type="term" value="F:calcium-activated potassium channel activity"/>
    <property type="evidence" value="ECO:0000314"/>
    <property type="project" value="UniProtKB"/>
</dbReference>
<dbReference type="GO" id="GO:0060072">
    <property type="term" value="F:large conductance calcium-activated potassium channel activity"/>
    <property type="evidence" value="ECO:0000247"/>
    <property type="project" value="AgBase"/>
</dbReference>
<dbReference type="GO" id="GO:0046872">
    <property type="term" value="F:metal ion binding"/>
    <property type="evidence" value="ECO:0007669"/>
    <property type="project" value="UniProtKB-KW"/>
</dbReference>
<dbReference type="GO" id="GO:0005267">
    <property type="term" value="F:potassium channel activity"/>
    <property type="evidence" value="ECO:0000247"/>
    <property type="project" value="AgBase"/>
</dbReference>
<dbReference type="GO" id="GO:0005249">
    <property type="term" value="F:voltage-gated potassium channel activity"/>
    <property type="evidence" value="ECO:0000314"/>
    <property type="project" value="UniProtKB"/>
</dbReference>
<dbReference type="GO" id="GO:0007628">
    <property type="term" value="P:adult walking behavior"/>
    <property type="evidence" value="ECO:0000247"/>
    <property type="project" value="AgBase"/>
</dbReference>
<dbReference type="GO" id="GO:0048469">
    <property type="term" value="P:cell maturation"/>
    <property type="evidence" value="ECO:0000247"/>
    <property type="project" value="AgBase"/>
</dbReference>
<dbReference type="GO" id="GO:0007268">
    <property type="term" value="P:chemical synaptic transmission"/>
    <property type="evidence" value="ECO:0000247"/>
    <property type="project" value="AgBase"/>
</dbReference>
<dbReference type="GO" id="GO:0007623">
    <property type="term" value="P:circadian rhythm"/>
    <property type="evidence" value="ECO:0000247"/>
    <property type="project" value="AgBase"/>
</dbReference>
<dbReference type="GO" id="GO:0060082">
    <property type="term" value="P:eye blink reflex"/>
    <property type="evidence" value="ECO:0000247"/>
    <property type="project" value="AgBase"/>
</dbReference>
<dbReference type="GO" id="GO:0042491">
    <property type="term" value="P:inner ear auditory receptor cell differentiation"/>
    <property type="evidence" value="ECO:0000247"/>
    <property type="project" value="AgBase"/>
</dbReference>
<dbReference type="GO" id="GO:0030007">
    <property type="term" value="P:intracellular potassium ion homeostasis"/>
    <property type="evidence" value="ECO:0000247"/>
    <property type="project" value="AgBase"/>
</dbReference>
<dbReference type="GO" id="GO:0045475">
    <property type="term" value="P:locomotor rhythm"/>
    <property type="evidence" value="ECO:0000247"/>
    <property type="project" value="AgBase"/>
</dbReference>
<dbReference type="GO" id="GO:0060073">
    <property type="term" value="P:micturition"/>
    <property type="evidence" value="ECO:0000247"/>
    <property type="project" value="AgBase"/>
</dbReference>
<dbReference type="GO" id="GO:0045794">
    <property type="term" value="P:negative regulation of cell volume"/>
    <property type="evidence" value="ECO:0000247"/>
    <property type="project" value="AgBase"/>
</dbReference>
<dbReference type="GO" id="GO:0050885">
    <property type="term" value="P:neuromuscular process controlling balance"/>
    <property type="evidence" value="ECO:0000247"/>
    <property type="project" value="AgBase"/>
</dbReference>
<dbReference type="GO" id="GO:0019228">
    <property type="term" value="P:neuronal action potential"/>
    <property type="evidence" value="ECO:0000247"/>
    <property type="project" value="AgBase"/>
</dbReference>
<dbReference type="GO" id="GO:0043065">
    <property type="term" value="P:positive regulation of apoptotic process"/>
    <property type="evidence" value="ECO:0000247"/>
    <property type="project" value="AgBase"/>
</dbReference>
<dbReference type="GO" id="GO:0071805">
    <property type="term" value="P:potassium ion transmembrane transport"/>
    <property type="evidence" value="ECO:0000247"/>
    <property type="project" value="AgBase"/>
</dbReference>
<dbReference type="GO" id="GO:0006813">
    <property type="term" value="P:potassium ion transport"/>
    <property type="evidence" value="ECO:0000247"/>
    <property type="project" value="AgBase"/>
</dbReference>
<dbReference type="GO" id="GO:0051260">
    <property type="term" value="P:protein homooligomerization"/>
    <property type="evidence" value="ECO:0000247"/>
    <property type="project" value="AgBase"/>
</dbReference>
<dbReference type="GO" id="GO:0032344">
    <property type="term" value="P:regulation of aldosterone metabolic process"/>
    <property type="evidence" value="ECO:0000247"/>
    <property type="project" value="AgBase"/>
</dbReference>
<dbReference type="GO" id="GO:0042391">
    <property type="term" value="P:regulation of membrane potential"/>
    <property type="evidence" value="ECO:0000247"/>
    <property type="project" value="AgBase"/>
</dbReference>
<dbReference type="GO" id="GO:0060087">
    <property type="term" value="P:relaxation of vascular associated smooth muscle"/>
    <property type="evidence" value="ECO:0000247"/>
    <property type="project" value="AgBase"/>
</dbReference>
<dbReference type="GO" id="GO:0051592">
    <property type="term" value="P:response to calcium ion"/>
    <property type="evidence" value="ECO:0000247"/>
    <property type="project" value="AgBase"/>
</dbReference>
<dbReference type="GO" id="GO:0034465">
    <property type="term" value="P:response to carbon monoxide"/>
    <property type="evidence" value="ECO:0000247"/>
    <property type="project" value="AgBase"/>
</dbReference>
<dbReference type="GO" id="GO:0001666">
    <property type="term" value="P:response to hypoxia"/>
    <property type="evidence" value="ECO:0000247"/>
    <property type="project" value="AgBase"/>
</dbReference>
<dbReference type="GO" id="GO:0006970">
    <property type="term" value="P:response to osmotic stress"/>
    <property type="evidence" value="ECO:0000247"/>
    <property type="project" value="AgBase"/>
</dbReference>
<dbReference type="GO" id="GO:0046541">
    <property type="term" value="P:saliva secretion"/>
    <property type="evidence" value="ECO:0000247"/>
    <property type="project" value="AgBase"/>
</dbReference>
<dbReference type="GO" id="GO:0007605">
    <property type="term" value="P:sensory perception of sound"/>
    <property type="evidence" value="ECO:0000247"/>
    <property type="project" value="AgBase"/>
</dbReference>
<dbReference type="GO" id="GO:0060083">
    <property type="term" value="P:smooth muscle contraction involved in micturition"/>
    <property type="evidence" value="ECO:0000247"/>
    <property type="project" value="AgBase"/>
</dbReference>
<dbReference type="GO" id="GO:0042311">
    <property type="term" value="P:vasodilation"/>
    <property type="evidence" value="ECO:0000247"/>
    <property type="project" value="AgBase"/>
</dbReference>
<dbReference type="FunFam" id="3.40.50.720:FF:000098">
    <property type="entry name" value="calcium-activated potassium channel subunit alpha-1 isoform X3"/>
    <property type="match status" value="1"/>
</dbReference>
<dbReference type="FunFam" id="3.40.50.720:FF:000005">
    <property type="entry name" value="calcium-activated potassium channel subunit alpha-1 isoform X6"/>
    <property type="match status" value="1"/>
</dbReference>
<dbReference type="FunFam" id="1.10.287.70:FF:000015">
    <property type="entry name" value="Calcium-activated potassium channel subunit alpha-1 isoform X7"/>
    <property type="match status" value="1"/>
</dbReference>
<dbReference type="Gene3D" id="1.10.287.70">
    <property type="match status" value="1"/>
</dbReference>
<dbReference type="Gene3D" id="3.40.50.720">
    <property type="entry name" value="NAD(P)-binding Rossmann-like Domain"/>
    <property type="match status" value="2"/>
</dbReference>
<dbReference type="InterPro" id="IPR005821">
    <property type="entry name" value="Ion_trans_dom"/>
</dbReference>
<dbReference type="InterPro" id="IPR003929">
    <property type="entry name" value="K_chnl_BK_asu"/>
</dbReference>
<dbReference type="InterPro" id="IPR047871">
    <property type="entry name" value="K_chnl_Slo-like"/>
</dbReference>
<dbReference type="InterPro" id="IPR036291">
    <property type="entry name" value="NAD(P)-bd_dom_sf"/>
</dbReference>
<dbReference type="InterPro" id="IPR003148">
    <property type="entry name" value="RCK_N"/>
</dbReference>
<dbReference type="InterPro" id="IPR048735">
    <property type="entry name" value="Slowpoke-like_C"/>
</dbReference>
<dbReference type="PANTHER" id="PTHR10027">
    <property type="entry name" value="CALCIUM-ACTIVATED POTASSIUM CHANNEL ALPHA CHAIN"/>
    <property type="match status" value="1"/>
</dbReference>
<dbReference type="PANTHER" id="PTHR10027:SF40">
    <property type="entry name" value="CALCIUM-ACTIVATED POTASSIUM CHANNEL SUBUNIT ALPHA-1"/>
    <property type="match status" value="1"/>
</dbReference>
<dbReference type="Pfam" id="PF03493">
    <property type="entry name" value="BK_channel_a"/>
    <property type="match status" value="1"/>
</dbReference>
<dbReference type="Pfam" id="PF00520">
    <property type="entry name" value="Ion_trans"/>
    <property type="match status" value="1"/>
</dbReference>
<dbReference type="Pfam" id="PF22614">
    <property type="entry name" value="Slo-like_RCK"/>
    <property type="match status" value="2"/>
</dbReference>
<dbReference type="Pfam" id="PF21014">
    <property type="entry name" value="Slowpoke_C"/>
    <property type="match status" value="1"/>
</dbReference>
<dbReference type="PRINTS" id="PR01449">
    <property type="entry name" value="BKCHANNELA"/>
</dbReference>
<dbReference type="SUPFAM" id="SSF51735">
    <property type="entry name" value="NAD(P)-binding Rossmann-fold domains"/>
    <property type="match status" value="1"/>
</dbReference>
<dbReference type="SUPFAM" id="SSF81324">
    <property type="entry name" value="Voltage-gated potassium channels"/>
    <property type="match status" value="1"/>
</dbReference>
<dbReference type="PROSITE" id="PS51201">
    <property type="entry name" value="RCK_N"/>
    <property type="match status" value="2"/>
</dbReference>
<protein>
    <recommendedName>
        <fullName>Calcium-activated potassium channel subunit alpha-1</fullName>
    </recommendedName>
    <alternativeName>
        <fullName>BK channel</fullName>
    </alternativeName>
    <alternativeName>
        <fullName>BKCA alpha</fullName>
    </alternativeName>
    <alternativeName>
        <fullName>Calcium-activated potassium channel, subfamily M subunit alpha-1</fullName>
    </alternativeName>
    <alternativeName>
        <fullName>K(VCA)alpha</fullName>
    </alternativeName>
    <alternativeName>
        <fullName>KCa1.1</fullName>
    </alternativeName>
    <alternativeName>
        <fullName>Maxi K channel</fullName>
        <shortName>MaxiK</shortName>
    </alternativeName>
    <alternativeName>
        <fullName>Slo-alpha</fullName>
    </alternativeName>
    <alternativeName>
        <fullName>Slo1</fullName>
    </alternativeName>
    <alternativeName>
        <fullName>Slowpoke homolog</fullName>
        <shortName>Slo homolog</shortName>
    </alternativeName>
</protein>
<name>KCMA1_CANLF</name>
<organism>
    <name type="scientific">Canis lupus familiaris</name>
    <name type="common">Dog</name>
    <name type="synonym">Canis familiaris</name>
    <dbReference type="NCBI Taxonomy" id="9615"/>
    <lineage>
        <taxon>Eukaryota</taxon>
        <taxon>Metazoa</taxon>
        <taxon>Chordata</taxon>
        <taxon>Craniata</taxon>
        <taxon>Vertebrata</taxon>
        <taxon>Euteleostomi</taxon>
        <taxon>Mammalia</taxon>
        <taxon>Eutheria</taxon>
        <taxon>Laurasiatheria</taxon>
        <taxon>Carnivora</taxon>
        <taxon>Caniformia</taxon>
        <taxon>Canidae</taxon>
        <taxon>Canis</taxon>
    </lineage>
</organism>
<comment type="function">
    <text evidence="4 9">Potassium channel activated by both membrane depolarization or increase in cytosolic Ca(2+) that mediates export of K(+). It is also activated by the concentration of cytosolic Mg(2+). Its activation dampens the excitatory events that elevate the cytosolic Ca(2+) concentration and/or depolarize the cell membrane. It therefore contributes to repolarization of the membrane potential. Plays a key role in controlling excitability in a number of systems, such as regulation of the contraction of smooth muscle, the tuning of hair cells in the cochlea, regulation of transmitter release, and innate immunity. In smooth muscles, its activation by high level of Ca(2+), caused by ryanodine receptors in the sarcoplasmic reticulum, regulates the membrane potential. In cochlea cells, its number and kinetic properties partly determine the characteristic frequency of each hair cell and thereby helps to establish a tonotopic map. Kinetics of KCNMA1 channels are determined by alternative splicing, phosphorylation status and its combination with modulating beta subunits. Highly sensitive to both iberiotoxin (IbTx) and charybdotoxin (CTX) (By similarity).</text>
</comment>
<comment type="catalytic activity">
    <reaction evidence="9">
        <text>K(+)(in) = K(+)(out)</text>
        <dbReference type="Rhea" id="RHEA:29463"/>
        <dbReference type="ChEBI" id="CHEBI:29103"/>
    </reaction>
</comment>
<comment type="activity regulation">
    <text evidence="4">Ethanol and carbon monoxide-bound heme increase channel activation. Heme inhibits channel activation (By similarity).</text>
</comment>
<comment type="subunit">
    <text evidence="3 4">Homotetramer; which constitutes the calcium-activated potassium channel. Interacts with beta subunits KCNMB1, KCNMB2, KCNMB3 and KCNMB4. Interacts with gamma subunits LRRC26, LRRC38, LRRC52 and LRRC55. Beta and gamma subunits are accessory, and modulate its activity. Interacts with RAB11B (By similarity).</text>
</comment>
<comment type="subcellular location">
    <subcellularLocation>
        <location evidence="4">Cell membrane</location>
        <topology evidence="6">Multi-pass membrane protein</topology>
    </subcellularLocation>
</comment>
<comment type="alternative products">
    <event type="alternative splicing"/>
    <isoform>
        <id>Q28265-1</id>
        <name>1</name>
        <sequence type="displayed"/>
    </isoform>
    <text>May be partially controlled by hormonal stress. A number of isoforms are produced.</text>
</comment>
<comment type="tissue specificity">
    <text evidence="9">Expressed in all vascular and smooth muscles.</text>
</comment>
<comment type="domain">
    <text evidence="4">The S0 segment is essential for the modulation by the accessory beta subunits KCNMB1, KCNMB2, KCNMB3 and KCNMB4.</text>
</comment>
<comment type="domain">
    <text evidence="4">The S4 segment, which is characterized by a series of positively charged amino acids at every third position, is part of the voltage-sensor.</text>
</comment>
<comment type="domain">
    <text evidence="4">The pore-forming domain (also referred as P region) is imbedded into the membrane, and forms the selectivity filter of the pore. It contains the signature sequence of potassium channels that displays selectivity to potassium (By similarity).</text>
</comment>
<comment type="domain">
    <text evidence="1">The RCK N-terminal domain mediates the homotetramerization, thereby promoting the assembly of monomers into functional potassium channel. It includes binding sites for Ca(2+) and Mg(2+) (By similarity).</text>
</comment>
<comment type="domain">
    <text evidence="4">The heme-binding motif mediates inhibition of channel activation by heme. Carbon monoxide-bound heme leads to increased channel activation (By similarity).</text>
</comment>
<comment type="domain">
    <text evidence="2">The calcium bowl constitutes one of the Ca(2+) sensors and probably acts as a Ca(2+)-binding site. There are however other Ca(2+) sensor regions required for activation of the channel.</text>
</comment>
<comment type="PTM">
    <text evidence="4 10">Phosphorylated (Probable). Phosphorylation by kinases such as PKA and/or PKG. In smooth muscles, phosphorylation affects its activity (By similarity).</text>
</comment>
<comment type="PTM">
    <text evidence="4">Palmitoylation by ZDHHC22 and ZDHHC23 within the intracellular linker between the S0 and S1 transmembrane domains regulates localization to the plasma membrane. Depalmitoylated by LYPLA1 and LYPLAL1, leading to retard exit from the trans-Golgi network (By similarity).</text>
</comment>
<comment type="miscellaneous">
    <text>The protein was initially thought to contain two functionally distinct parts: The core channel (from the N-terminus to the S9 segment) that mediates the channel activity, and the cytoplasmic tail (from the S9 segment to the C-terminus) that mediates the calcium sensing. The situation is however more complex, since the core channel contains binding sites for Ca(2+) and Mg(2+).</text>
</comment>
<comment type="similarity">
    <text evidence="10">Belongs to the potassium channel family. Calcium-activated (TC 1.A.1.3) subfamily. KCa1.1/KCNMA1 sub-subfamily.</text>
</comment>